<accession>O08648</accession>
<accession>O08649</accession>
<accession>O70124</accession>
<accession>Q6PDG6</accession>
<proteinExistence type="evidence at protein level"/>
<organism>
    <name type="scientific">Mus musculus</name>
    <name type="common">Mouse</name>
    <dbReference type="NCBI Taxonomy" id="10090"/>
    <lineage>
        <taxon>Eukaryota</taxon>
        <taxon>Metazoa</taxon>
        <taxon>Chordata</taxon>
        <taxon>Craniata</taxon>
        <taxon>Vertebrata</taxon>
        <taxon>Euteleostomi</taxon>
        <taxon>Mammalia</taxon>
        <taxon>Eutheria</taxon>
        <taxon>Euarchontoglires</taxon>
        <taxon>Glires</taxon>
        <taxon>Rodentia</taxon>
        <taxon>Myomorpha</taxon>
        <taxon>Muroidea</taxon>
        <taxon>Muridae</taxon>
        <taxon>Murinae</taxon>
        <taxon>Mus</taxon>
        <taxon>Mus</taxon>
    </lineage>
</organism>
<evidence type="ECO:0000250" key="1"/>
<evidence type="ECO:0000250" key="2">
    <source>
        <dbReference type="UniProtKB" id="Q9Y6R4"/>
    </source>
</evidence>
<evidence type="ECO:0000255" key="3">
    <source>
        <dbReference type="PROSITE-ProRule" id="PRU00159"/>
    </source>
</evidence>
<evidence type="ECO:0000255" key="4">
    <source>
        <dbReference type="PROSITE-ProRule" id="PRU10027"/>
    </source>
</evidence>
<evidence type="ECO:0000256" key="5">
    <source>
        <dbReference type="SAM" id="MobiDB-lite"/>
    </source>
</evidence>
<evidence type="ECO:0000269" key="6">
    <source>
    </source>
</evidence>
<evidence type="ECO:0000269" key="7">
    <source>
    </source>
</evidence>
<evidence type="ECO:0000269" key="8">
    <source>
    </source>
</evidence>
<evidence type="ECO:0000303" key="9">
    <source>
    </source>
</evidence>
<evidence type="ECO:0000305" key="10"/>
<evidence type="ECO:0007744" key="11">
    <source>
    </source>
</evidence>
<evidence type="ECO:0007744" key="12">
    <source>
    </source>
</evidence>
<reference key="1">
    <citation type="journal article" date="1997" name="J. Biol. Chem.">
        <title>Cloning of a novel mitogen-activated protein kinase kinase kinase, MEKK4, that selectively regulates the c-Jun amino terminal kinase pathway.</title>
        <authorList>
            <person name="Gerwins P."/>
            <person name="Blank J.L."/>
            <person name="Johnson G.L."/>
        </authorList>
    </citation>
    <scope>NUCLEOTIDE SEQUENCE [MRNA] (ISOFORMS A AND B)</scope>
    <scope>FUNCTION</scope>
    <scope>INTERACTION WITH CDC42</scope>
    <scope>MUTAGENESIS OF LYS-1361</scope>
    <source>
        <tissue>Brain</tissue>
    </source>
</reference>
<reference key="2">
    <citation type="journal article" date="2004" name="Genome Res.">
        <title>The status, quality, and expansion of the NIH full-length cDNA project: the Mammalian Gene Collection (MGC).</title>
        <authorList>
            <consortium name="The MGC Project Team"/>
        </authorList>
    </citation>
    <scope>NUCLEOTIDE SEQUENCE [LARGE SCALE MRNA] (ISOFORM A)</scope>
    <source>
        <strain>C57BL/6J</strain>
        <tissue>Brain</tissue>
    </source>
</reference>
<reference key="3">
    <citation type="journal article" date="1997" name="Genomics">
        <title>Characterization of the C3 YAC contig from proximal mouse chromosome 17 and analysis of allelic expression of genes flanking the imprinted Igf2r gene.</title>
        <authorList>
            <person name="Schweifer N."/>
            <person name="Valk P.J."/>
            <person name="Delwel R."/>
            <person name="Cox R."/>
            <person name="Francis F."/>
            <person name="Meier-Ewert S."/>
            <person name="Lehrach H."/>
            <person name="Barlow D.P."/>
        </authorList>
    </citation>
    <scope>NUCLEOTIDE SEQUENCE [MRNA] OF 363-1049</scope>
    <source>
        <strain>C57BL/6J</strain>
        <tissue>Ectoplacental cone</tissue>
    </source>
</reference>
<reference key="4">
    <citation type="journal article" date="2004" name="J. Biol. Chem.">
        <title>The DIX domain protein coiled-coil-DIX1 inhibits c-Jun N-terminal kinase activation by Axin and dishevelled through distinct mechanisms.</title>
        <authorList>
            <person name="Wong C.K."/>
            <person name="Luo W."/>
            <person name="Deng Y."/>
            <person name="Zou H."/>
            <person name="Ye Z."/>
            <person name="Lin S.-C."/>
        </authorList>
    </citation>
    <scope>INTERACTION WITH AXIN1 AND DIXDC1</scope>
</reference>
<reference key="5">
    <citation type="journal article" date="2005" name="J. Biol. Chem.">
        <title>MEKK4 is an effector of the embryonic TRAF4 for JNK activation.</title>
        <authorList>
            <person name="Abell A.N."/>
            <person name="Johnson G.L."/>
        </authorList>
    </citation>
    <scope>FUNCTION</scope>
    <scope>SUBCELLULAR LOCATION</scope>
    <scope>MUTAGENESIS OF LYS-1361</scope>
    <scope>INTERACTION WITH TRAF4</scope>
</reference>
<reference key="6">
    <citation type="journal article" date="2007" name="Proc. Natl. Acad. Sci. U.S.A.">
        <title>Large-scale phosphorylation analysis of mouse liver.</title>
        <authorList>
            <person name="Villen J."/>
            <person name="Beausoleil S.A."/>
            <person name="Gerber S.A."/>
            <person name="Gygi S.P."/>
        </authorList>
    </citation>
    <scope>PHOSPHORYLATION [LARGE SCALE ANALYSIS] AT SER-492</scope>
    <scope>IDENTIFICATION BY MASS SPECTROMETRY [LARGE SCALE ANALYSIS]</scope>
    <source>
        <tissue>Liver</tissue>
    </source>
</reference>
<reference key="7">
    <citation type="journal article" date="2010" name="Cell">
        <title>A tissue-specific atlas of mouse protein phosphorylation and expression.</title>
        <authorList>
            <person name="Huttlin E.L."/>
            <person name="Jedrychowski M.P."/>
            <person name="Elias J.E."/>
            <person name="Goswami T."/>
            <person name="Rad R."/>
            <person name="Beausoleil S.A."/>
            <person name="Villen J."/>
            <person name="Haas W."/>
            <person name="Sowa M.E."/>
            <person name="Gygi S.P."/>
        </authorList>
    </citation>
    <scope>PHOSPHORYLATION [LARGE SCALE ANALYSIS] AT SER-77; SER-449; THR-451; SER-454 AND SER-492</scope>
    <scope>IDENTIFICATION BY MASS SPECTROMETRY [LARGE SCALE ANALYSIS]</scope>
    <source>
        <tissue>Brain</tissue>
        <tissue>Heart</tissue>
        <tissue>Kidney</tissue>
        <tissue>Liver</tissue>
        <tissue>Lung</tissue>
        <tissue>Pancreas</tissue>
        <tissue>Spleen</tissue>
        <tissue>Testis</tissue>
    </source>
</reference>
<gene>
    <name type="primary">Map3k4</name>
    <name type="synonym">Mekk4</name>
</gene>
<keyword id="KW-0025">Alternative splicing</keyword>
<keyword id="KW-0067">ATP-binding</keyword>
<keyword id="KW-0963">Cytoplasm</keyword>
<keyword id="KW-0418">Kinase</keyword>
<keyword id="KW-0460">Magnesium</keyword>
<keyword id="KW-0479">Metal-binding</keyword>
<keyword id="KW-0547">Nucleotide-binding</keyword>
<keyword id="KW-0597">Phosphoprotein</keyword>
<keyword id="KW-1185">Reference proteome</keyword>
<keyword id="KW-0723">Serine/threonine-protein kinase</keyword>
<keyword id="KW-0808">Transferase</keyword>
<sequence>MRDAIAEPVPPPALADTPAAAMEELRPAPPPQPEPDPECCPAARQECMLGESARKSMESDPEDFSDETNTETLYGTSPPSTPRQMKRLSAKHQRNSAGRPASRSNLKEKMNTPSQSPHKDLGKGVETVEEYSYKQEKKIRATLRTTERDHKKNAQCSFMLDSVAGSLPKKSIPDVDLNKPYLSLGCSNAKLPVSMPMPIARTARQTSRTDCPADRLKFFETLRLLLKLTSVSKKKDREQRGQENTAAFWFNRSNELIWLELQAWHAGRTINDQDLFLYTARQAIPDIINEILTFKVNYGSIAFSSNGAGFNGPLVEGQCRTPQETNRVGCSSYHEHLQRQRVSFEQVKRIMELLEYMEALYPSLQALQKDYERYAAKDFEDRVQALCLWLNITKDLNQKLRIMGTVLGIKNLSDIGWPVFEIPSPRPSKGYEPEDEVEDTEVELRELESGTEESDEEPTPSPRVPELRLSTDAILDSRSQGCVSRKLERLESEEDSIGWGTADCGPEASRHCLTSIYRPFVDKALKQMGLRKLILRLHKLMNGSLQRARVALVKDDRPVEFSDFPGPMWGSDYVQLSGTPPSSEQKCSAVSWEELRAMDLPSFEPAFLVLCRVLLNVIHECLKLRLEQRPAGEPSLLSIKQLVRECKEVLKGGLLMKQYYQFMLQEVLGGLEKTDCNMDAFEEDLQKMLMVYFDYMRSWIQMLQQLPQASHSLKNLLEEEWNFTKEITHYIRGGEAQAGKLFCDIAGMLLKSTGSFLESGLQESCAELWTSADDNGAADELRRSVIEISRALKELFHEARERASKALGFAKMLRKDLEIAAEFVLSASARELLDALKAKQYVKVQIPGLENLHVFVPDSLAEEKKIILQLLNAATGKDCSKDPDDVFMDAFLLLTKHGDRARDSEDGWGTWEARAVKIVPQVETVDTLRSMQVDNLLLVVMESAHLVLQRKAFQQSIEGLMTVRHEQTSSQPIIAKGLQQLKNDALELCNRISDAIDRVDHMFTLEFDAEVEESESATLQQYYREAMIQGYNFGFEYHKEVVRLMSGEFRQKIGDKYISFAQKWMNYVLTKCESGRGTRPRWATQGFDFLQAIEPAFISALPEDDFLSLQALMNECIGHVIGKPHSPVTAIHRNSPRPVKVPRCHSDPPNPHLIIPTPEGFSTRSVPSDARTHGNSVAAAAAVAAAATTAAGRPGPGGGDSVPAKPVNTAPDTRGSSVPENDRLASIAAELQFRSLSRHSSPTEERDEPAYPRSDSSGSTRRSWELRTLISQTKDSASKQGPIEAIQKSVRLFEERRYREMRRKNIIGQVCDTPKSYDNVMHVGLRKVTFKWQRGNKIGEGQYGKVYTCISVDTGELMAMKEIRFQPNDHKTIKETADELKIFEGIKHPNLVRYFGVELHREEMYIFMEYCDEGTLEEVSRLGLQEHVIRLYTKQITVAINVLHEHGIVHRDIKGANIFLTSSGLIKLGDFGCSVKLKNNAQTMPGEVNSTLGTAAYMAPEVITRAKGEGHGRAADIWSLGCVVIEMVTGKRPWHEYEHNFQIMYKVGMGHKPPIPERLSPEGKAFLSHCLESDPKIRWTASQLLDHAFVKVCTDEE</sequence>
<name>M3K4_MOUSE</name>
<protein>
    <recommendedName>
        <fullName>Mitogen-activated protein kinase kinase kinase 4</fullName>
        <ecNumber>2.7.11.25</ecNumber>
    </recommendedName>
    <alternativeName>
        <fullName>MAPK/ERK kinase kinase 4</fullName>
        <shortName>MEK kinase 4</shortName>
        <shortName>MEKK 4</shortName>
    </alternativeName>
</protein>
<comment type="function">
    <text evidence="7 8">Component of a protein kinase signal transduction cascade. Activates the CSBP2, P38 and JNK MAPK pathways, but not the ERK pathway. Specifically phosphorylates and activates MAP2K4 and MAP2K6.</text>
</comment>
<comment type="catalytic activity">
    <reaction>
        <text>L-seryl-[protein] + ATP = O-phospho-L-seryl-[protein] + ADP + H(+)</text>
        <dbReference type="Rhea" id="RHEA:17989"/>
        <dbReference type="Rhea" id="RHEA-COMP:9863"/>
        <dbReference type="Rhea" id="RHEA-COMP:11604"/>
        <dbReference type="ChEBI" id="CHEBI:15378"/>
        <dbReference type="ChEBI" id="CHEBI:29999"/>
        <dbReference type="ChEBI" id="CHEBI:30616"/>
        <dbReference type="ChEBI" id="CHEBI:83421"/>
        <dbReference type="ChEBI" id="CHEBI:456216"/>
        <dbReference type="EC" id="2.7.11.25"/>
    </reaction>
</comment>
<comment type="catalytic activity">
    <reaction>
        <text>L-threonyl-[protein] + ATP = O-phospho-L-threonyl-[protein] + ADP + H(+)</text>
        <dbReference type="Rhea" id="RHEA:46608"/>
        <dbReference type="Rhea" id="RHEA-COMP:11060"/>
        <dbReference type="Rhea" id="RHEA-COMP:11605"/>
        <dbReference type="ChEBI" id="CHEBI:15378"/>
        <dbReference type="ChEBI" id="CHEBI:30013"/>
        <dbReference type="ChEBI" id="CHEBI:30616"/>
        <dbReference type="ChEBI" id="CHEBI:61977"/>
        <dbReference type="ChEBI" id="CHEBI:456216"/>
        <dbReference type="EC" id="2.7.11.25"/>
    </reaction>
</comment>
<comment type="cofactor">
    <cofactor>
        <name>Mg(2+)</name>
        <dbReference type="ChEBI" id="CHEBI:18420"/>
    </cofactor>
</comment>
<comment type="activity regulation">
    <text evidence="1">N-terminal autoinhibitory domain interacts with the C-terminal kinase domain, inhibiting kinase activity, and preventing interaction with its substrate, MAP2K6. The GADD45 proteins activate the kinase by binding to the N-terminal domain. Activated by phosphorylation on Thr-1494 (By similarity).</text>
</comment>
<comment type="subunit">
    <text evidence="2 6 7 8">Monomer and homodimer. Homodimerization enhances kinase activity. Interacts with CDC42 (PubMed:9079650). Interacts with TRAF4; this promotes homodimerization (PubMed:16157600). Binds both upstream activators and downstream substrates in multimolecular complexes. Interacts with AXIN1 and DIXDC1; interaction with DIXDC1 prevents interaction with AXIN1 (PubMed:15262978). Interacts with GADD45 and MAP2K6 (By similarity). Interacts with ZFP36; this interaction enhances the association with SH3KBP1/CIN85. Interacts with SH3KBP1; this interaction enhances the association with ZFP36 (By similarity).</text>
</comment>
<comment type="subcellular location">
    <subcellularLocation>
        <location evidence="7">Cytoplasm</location>
        <location evidence="7">Perinuclear region</location>
    </subcellularLocation>
    <text>Localized in perinuclear vesicular-like structures, probably Golgi-associated vesicles.</text>
</comment>
<comment type="alternative products">
    <event type="alternative splicing"/>
    <isoform>
        <id>O08648-1</id>
        <name>A</name>
        <sequence type="displayed"/>
    </isoform>
    <isoform>
        <id>O08648-2</id>
        <name>B</name>
        <sequence type="described" ref="VSP_004885"/>
    </isoform>
</comment>
<comment type="tissue specificity">
    <text>Widely expressed. High expression was found in skeletal muscle, kidney, testis followed by heart brain and lung. Low expression was found in spleen.</text>
</comment>
<comment type="similarity">
    <text evidence="10">Belongs to the protein kinase superfamily. STE Ser/Thr protein kinase family. MAP kinase kinase kinase subfamily.</text>
</comment>
<feature type="chain" id="PRO_0000086248" description="Mitogen-activated protein kinase kinase kinase 4">
    <location>
        <begin position="1"/>
        <end position="1597"/>
    </location>
</feature>
<feature type="domain" description="Protein kinase" evidence="3">
    <location>
        <begin position="1332"/>
        <end position="1590"/>
    </location>
</feature>
<feature type="region of interest" description="Disordered" evidence="5">
    <location>
        <begin position="1"/>
        <end position="128"/>
    </location>
</feature>
<feature type="region of interest" description="Disordered" evidence="5">
    <location>
        <begin position="424"/>
        <end position="465"/>
    </location>
</feature>
<feature type="region of interest" description="Disordered" evidence="5">
    <location>
        <begin position="1137"/>
        <end position="1157"/>
    </location>
</feature>
<feature type="region of interest" description="Disordered" evidence="5">
    <location>
        <begin position="1190"/>
        <end position="1220"/>
    </location>
</feature>
<feature type="region of interest" description="Disordered" evidence="5">
    <location>
        <begin position="1233"/>
        <end position="1263"/>
    </location>
</feature>
<feature type="compositionally biased region" description="Acidic residues" evidence="5">
    <location>
        <begin position="59"/>
        <end position="69"/>
    </location>
</feature>
<feature type="compositionally biased region" description="Basic residues" evidence="5">
    <location>
        <begin position="84"/>
        <end position="94"/>
    </location>
</feature>
<feature type="compositionally biased region" description="Acidic residues" evidence="5">
    <location>
        <begin position="449"/>
        <end position="458"/>
    </location>
</feature>
<feature type="compositionally biased region" description="Polar residues" evidence="5">
    <location>
        <begin position="1210"/>
        <end position="1219"/>
    </location>
</feature>
<feature type="compositionally biased region" description="Basic and acidic residues" evidence="5">
    <location>
        <begin position="1241"/>
        <end position="1250"/>
    </location>
</feature>
<feature type="active site" description="Proton acceptor" evidence="3 4">
    <location>
        <position position="1452"/>
    </location>
</feature>
<feature type="binding site" evidence="3">
    <location>
        <begin position="1338"/>
        <end position="1346"/>
    </location>
    <ligand>
        <name>ATP</name>
        <dbReference type="ChEBI" id="CHEBI:30616"/>
    </ligand>
</feature>
<feature type="binding site">
    <location>
        <position position="1361"/>
    </location>
    <ligand>
        <name>ATP</name>
        <dbReference type="ChEBI" id="CHEBI:30616"/>
    </ligand>
</feature>
<feature type="modified residue" description="Phosphoserine" evidence="12">
    <location>
        <position position="77"/>
    </location>
</feature>
<feature type="modified residue" description="Phosphoserine" evidence="2">
    <location>
        <position position="424"/>
    </location>
</feature>
<feature type="modified residue" description="Phosphothreonine" evidence="2">
    <location>
        <position position="440"/>
    </location>
</feature>
<feature type="modified residue" description="Phosphoserine" evidence="12">
    <location>
        <position position="449"/>
    </location>
</feature>
<feature type="modified residue" description="Phosphothreonine" evidence="12">
    <location>
        <position position="451"/>
    </location>
</feature>
<feature type="modified residue" description="Phosphoserine" evidence="12">
    <location>
        <position position="454"/>
    </location>
</feature>
<feature type="modified residue" description="Phosphoserine" evidence="11 12">
    <location>
        <position position="492"/>
    </location>
</feature>
<feature type="modified residue" description="Phosphoserine" evidence="2">
    <location>
        <position position="1241"/>
    </location>
</feature>
<feature type="modified residue" description="Phosphoserine" evidence="2">
    <location>
        <position position="1263"/>
    </location>
</feature>
<feature type="splice variant" id="VSP_004885" description="In isoform B." evidence="9">
    <location>
        <begin position="1162"/>
        <end position="1213"/>
    </location>
</feature>
<feature type="mutagenesis site" description="Loss of kinase activity." evidence="7 8">
    <original>K</original>
    <variation>A</variation>
    <variation>R</variation>
    <location>
        <position position="1361"/>
    </location>
</feature>
<feature type="sequence conflict" description="In Ref. 3; AAC08286." evidence="10" ref="3">
    <original>SL</original>
    <variation>NS</variation>
    <location>
        <begin position="363"/>
        <end position="364"/>
    </location>
</feature>
<feature type="sequence conflict" description="In Ref. 1; AAC53126/AAC53127." evidence="10" ref="1">
    <original>A</original>
    <variation>T</variation>
    <location>
        <position position="473"/>
    </location>
</feature>
<feature type="sequence conflict" description="In Ref. 1; AAC53126." evidence="10" ref="1">
    <original>A</original>
    <variation>R</variation>
    <location>
        <position position="1184"/>
    </location>
</feature>
<dbReference type="EC" id="2.7.11.25"/>
<dbReference type="EMBL" id="U85607">
    <property type="protein sequence ID" value="AAC53126.1"/>
    <property type="molecule type" value="mRNA"/>
</dbReference>
<dbReference type="EMBL" id="U85608">
    <property type="protein sequence ID" value="AAC53127.1"/>
    <property type="molecule type" value="mRNA"/>
</dbReference>
<dbReference type="EMBL" id="BC058719">
    <property type="protein sequence ID" value="AAH58719.1"/>
    <property type="molecule type" value="mRNA"/>
</dbReference>
<dbReference type="EMBL" id="U66240">
    <property type="protein sequence ID" value="AAC08286.1"/>
    <property type="molecule type" value="mRNA"/>
</dbReference>
<dbReference type="CCDS" id="CCDS37435.1">
    <molecule id="O08648-1"/>
</dbReference>
<dbReference type="CCDS" id="CCDS88991.1">
    <molecule id="O08648-2"/>
</dbReference>
<dbReference type="RefSeq" id="NP_001344651.1">
    <molecule id="O08648-2"/>
    <property type="nucleotide sequence ID" value="NM_001357722.1"/>
</dbReference>
<dbReference type="RefSeq" id="NP_036078.2">
    <molecule id="O08648-1"/>
    <property type="nucleotide sequence ID" value="NM_011948.2"/>
</dbReference>
<dbReference type="RefSeq" id="XP_006523392.1">
    <property type="nucleotide sequence ID" value="XM_006523329.3"/>
</dbReference>
<dbReference type="SMR" id="O08648"/>
<dbReference type="BioGRID" id="204960">
    <property type="interactions" value="10"/>
</dbReference>
<dbReference type="CORUM" id="O08648"/>
<dbReference type="FunCoup" id="O08648">
    <property type="interactions" value="3820"/>
</dbReference>
<dbReference type="STRING" id="10090.ENSMUSP00000086459"/>
<dbReference type="GlyGen" id="O08648">
    <property type="glycosylation" value="2 sites, 1 N-linked glycan (1 site)"/>
</dbReference>
<dbReference type="iPTMnet" id="O08648"/>
<dbReference type="PhosphoSitePlus" id="O08648"/>
<dbReference type="jPOST" id="O08648"/>
<dbReference type="PaxDb" id="10090-ENSMUSP00000086459"/>
<dbReference type="PeptideAtlas" id="O08648"/>
<dbReference type="ProteomicsDB" id="292137">
    <molecule id="O08648-1"/>
</dbReference>
<dbReference type="ProteomicsDB" id="292138">
    <molecule id="O08648-2"/>
</dbReference>
<dbReference type="Pumba" id="O08648"/>
<dbReference type="Antibodypedia" id="2064">
    <property type="antibodies" value="341 antibodies from 36 providers"/>
</dbReference>
<dbReference type="DNASU" id="26407"/>
<dbReference type="Ensembl" id="ENSMUST00000089058.7">
    <molecule id="O08648-1"/>
    <property type="protein sequence ID" value="ENSMUSP00000086459.6"/>
    <property type="gene ID" value="ENSMUSG00000014426.10"/>
</dbReference>
<dbReference type="Ensembl" id="ENSMUST00000233755.2">
    <molecule id="O08648-2"/>
    <property type="protein sequence ID" value="ENSMUSP00000156730.2"/>
    <property type="gene ID" value="ENSMUSG00000014426.10"/>
</dbReference>
<dbReference type="GeneID" id="26407"/>
<dbReference type="KEGG" id="mmu:26407"/>
<dbReference type="UCSC" id="uc008akn.1">
    <molecule id="O08648-1"/>
    <property type="organism name" value="mouse"/>
</dbReference>
<dbReference type="UCSC" id="uc008ako.1">
    <molecule id="O08648-2"/>
    <property type="organism name" value="mouse"/>
</dbReference>
<dbReference type="AGR" id="MGI:1346875"/>
<dbReference type="CTD" id="4216"/>
<dbReference type="MGI" id="MGI:1346875">
    <property type="gene designation" value="Map3k4"/>
</dbReference>
<dbReference type="VEuPathDB" id="HostDB:ENSMUSG00000014426"/>
<dbReference type="eggNOG" id="KOG4645">
    <property type="taxonomic scope" value="Eukaryota"/>
</dbReference>
<dbReference type="GeneTree" id="ENSGT00880000138034"/>
<dbReference type="HOGENOM" id="CLU_003786_0_0_1"/>
<dbReference type="InParanoid" id="O08648"/>
<dbReference type="OMA" id="DEHQFEE"/>
<dbReference type="OrthoDB" id="1043025at2759"/>
<dbReference type="PhylomeDB" id="O08648"/>
<dbReference type="TreeFam" id="TF105114"/>
<dbReference type="BRENDA" id="2.7.11.25">
    <property type="organism ID" value="3474"/>
</dbReference>
<dbReference type="BioGRID-ORCS" id="26407">
    <property type="hits" value="8 hits in 80 CRISPR screens"/>
</dbReference>
<dbReference type="ChiTaRS" id="Map3k4">
    <property type="organism name" value="mouse"/>
</dbReference>
<dbReference type="PRO" id="PR:O08648"/>
<dbReference type="Proteomes" id="UP000000589">
    <property type="component" value="Chromosome 17"/>
</dbReference>
<dbReference type="RNAct" id="O08648">
    <property type="molecule type" value="protein"/>
</dbReference>
<dbReference type="Bgee" id="ENSMUSG00000014426">
    <property type="expression patterns" value="Expressed in urogenital fold and 276 other cell types or tissues"/>
</dbReference>
<dbReference type="ExpressionAtlas" id="O08648">
    <property type="expression patterns" value="baseline and differential"/>
</dbReference>
<dbReference type="GO" id="GO:0005737">
    <property type="term" value="C:cytoplasm"/>
    <property type="evidence" value="ECO:0000314"/>
    <property type="project" value="UniProtKB"/>
</dbReference>
<dbReference type="GO" id="GO:0048471">
    <property type="term" value="C:perinuclear region of cytoplasm"/>
    <property type="evidence" value="ECO:0007669"/>
    <property type="project" value="UniProtKB-SubCell"/>
</dbReference>
<dbReference type="GO" id="GO:0005524">
    <property type="term" value="F:ATP binding"/>
    <property type="evidence" value="ECO:0007669"/>
    <property type="project" value="UniProtKB-KW"/>
</dbReference>
<dbReference type="GO" id="GO:0004709">
    <property type="term" value="F:MAP kinase kinase kinase activity"/>
    <property type="evidence" value="ECO:0007669"/>
    <property type="project" value="UniProtKB-EC"/>
</dbReference>
<dbReference type="GO" id="GO:0046872">
    <property type="term" value="F:metal ion binding"/>
    <property type="evidence" value="ECO:0007669"/>
    <property type="project" value="UniProtKB-KW"/>
</dbReference>
<dbReference type="GO" id="GO:0004672">
    <property type="term" value="F:protein kinase activity"/>
    <property type="evidence" value="ECO:0000314"/>
    <property type="project" value="UniProtKB"/>
</dbReference>
<dbReference type="GO" id="GO:0106310">
    <property type="term" value="F:protein serine kinase activity"/>
    <property type="evidence" value="ECO:0007669"/>
    <property type="project" value="RHEA"/>
</dbReference>
<dbReference type="GO" id="GO:0060718">
    <property type="term" value="P:chorionic trophoblast cell differentiation"/>
    <property type="evidence" value="ECO:0000315"/>
    <property type="project" value="MGI"/>
</dbReference>
<dbReference type="GO" id="GO:0035556">
    <property type="term" value="P:intracellular signal transduction"/>
    <property type="evidence" value="ECO:0000314"/>
    <property type="project" value="UniProtKB"/>
</dbReference>
<dbReference type="GO" id="GO:0019100">
    <property type="term" value="P:male germ-line sex determination"/>
    <property type="evidence" value="ECO:0000315"/>
    <property type="project" value="MGI"/>
</dbReference>
<dbReference type="GO" id="GO:0001890">
    <property type="term" value="P:placenta development"/>
    <property type="evidence" value="ECO:0000315"/>
    <property type="project" value="MGI"/>
</dbReference>
<dbReference type="GO" id="GO:0043507">
    <property type="term" value="P:positive regulation of JUN kinase activity"/>
    <property type="evidence" value="ECO:0000314"/>
    <property type="project" value="UniProtKB"/>
</dbReference>
<dbReference type="GO" id="GO:1900745">
    <property type="term" value="P:positive regulation of p38MAPK cascade"/>
    <property type="evidence" value="ECO:0007669"/>
    <property type="project" value="Ensembl"/>
</dbReference>
<dbReference type="GO" id="GO:0032206">
    <property type="term" value="P:positive regulation of telomere maintenance"/>
    <property type="evidence" value="ECO:0007669"/>
    <property type="project" value="Ensembl"/>
</dbReference>
<dbReference type="GO" id="GO:0010468">
    <property type="term" value="P:regulation of gene expression"/>
    <property type="evidence" value="ECO:0000315"/>
    <property type="project" value="MGI"/>
</dbReference>
<dbReference type="GO" id="GO:0010225">
    <property type="term" value="P:response to UV-C"/>
    <property type="evidence" value="ECO:0007669"/>
    <property type="project" value="Ensembl"/>
</dbReference>
<dbReference type="CDD" id="cd06626">
    <property type="entry name" value="STKc_MEKK4"/>
    <property type="match status" value="1"/>
</dbReference>
<dbReference type="FunFam" id="1.10.510.10:FF:000122">
    <property type="entry name" value="Mitogen-activated protein kinase kinase kinase 4"/>
    <property type="match status" value="1"/>
</dbReference>
<dbReference type="Gene3D" id="1.10.510.10">
    <property type="entry name" value="Transferase(Phosphotransferase) domain 1"/>
    <property type="match status" value="1"/>
</dbReference>
<dbReference type="InterPro" id="IPR011009">
    <property type="entry name" value="Kinase-like_dom_sf"/>
</dbReference>
<dbReference type="InterPro" id="IPR050538">
    <property type="entry name" value="MAP_kinase_kinase_kinase"/>
</dbReference>
<dbReference type="InterPro" id="IPR045801">
    <property type="entry name" value="MEKK4_N"/>
</dbReference>
<dbReference type="InterPro" id="IPR000719">
    <property type="entry name" value="Prot_kinase_dom"/>
</dbReference>
<dbReference type="InterPro" id="IPR017441">
    <property type="entry name" value="Protein_kinase_ATP_BS"/>
</dbReference>
<dbReference type="InterPro" id="IPR008271">
    <property type="entry name" value="Ser/Thr_kinase_AS"/>
</dbReference>
<dbReference type="PANTHER" id="PTHR48016">
    <property type="entry name" value="MAP KINASE KINASE KINASE SSK2-RELATED-RELATED"/>
    <property type="match status" value="1"/>
</dbReference>
<dbReference type="PANTHER" id="PTHR48016:SF32">
    <property type="entry name" value="MITOGEN-ACTIVATED PROTEIN KINASE KINASE KINASE 4"/>
    <property type="match status" value="1"/>
</dbReference>
<dbReference type="Pfam" id="PF19431">
    <property type="entry name" value="MEKK4_N"/>
    <property type="match status" value="1"/>
</dbReference>
<dbReference type="Pfam" id="PF00069">
    <property type="entry name" value="Pkinase"/>
    <property type="match status" value="1"/>
</dbReference>
<dbReference type="SMART" id="SM00220">
    <property type="entry name" value="S_TKc"/>
    <property type="match status" value="1"/>
</dbReference>
<dbReference type="SUPFAM" id="SSF56112">
    <property type="entry name" value="Protein kinase-like (PK-like)"/>
    <property type="match status" value="1"/>
</dbReference>
<dbReference type="PROSITE" id="PS00107">
    <property type="entry name" value="PROTEIN_KINASE_ATP"/>
    <property type="match status" value="1"/>
</dbReference>
<dbReference type="PROSITE" id="PS50011">
    <property type="entry name" value="PROTEIN_KINASE_DOM"/>
    <property type="match status" value="1"/>
</dbReference>
<dbReference type="PROSITE" id="PS00108">
    <property type="entry name" value="PROTEIN_KINASE_ST"/>
    <property type="match status" value="1"/>
</dbReference>